<comment type="function">
    <text evidence="1">Probably deamidates glutamine residues to glutamate on methyl-accepting chemotaxis receptors (MCPs), playing an important role in chemotaxis.</text>
</comment>
<comment type="catalytic activity">
    <reaction evidence="1">
        <text>L-glutaminyl-[protein] + H2O = L-glutamyl-[protein] + NH4(+)</text>
        <dbReference type="Rhea" id="RHEA:16441"/>
        <dbReference type="Rhea" id="RHEA-COMP:10207"/>
        <dbReference type="Rhea" id="RHEA-COMP:10208"/>
        <dbReference type="ChEBI" id="CHEBI:15377"/>
        <dbReference type="ChEBI" id="CHEBI:28938"/>
        <dbReference type="ChEBI" id="CHEBI:29973"/>
        <dbReference type="ChEBI" id="CHEBI:30011"/>
        <dbReference type="EC" id="3.5.1.44"/>
    </reaction>
</comment>
<comment type="similarity">
    <text evidence="1">Belongs to the CheD family.</text>
</comment>
<reference key="1">
    <citation type="submission" date="2002-12" db="EMBL/GenBank/DDBJ databases">
        <title>Complete genome sequence of Vibrio vulnificus CMCP6.</title>
        <authorList>
            <person name="Rhee J.H."/>
            <person name="Kim S.Y."/>
            <person name="Chung S.S."/>
            <person name="Kim J.J."/>
            <person name="Moon Y.H."/>
            <person name="Jeong H."/>
            <person name="Choy H.E."/>
        </authorList>
    </citation>
    <scope>NUCLEOTIDE SEQUENCE [LARGE SCALE GENOMIC DNA]</scope>
    <source>
        <strain>CMCP6</strain>
    </source>
</reference>
<keyword id="KW-0145">Chemotaxis</keyword>
<keyword id="KW-0378">Hydrolase</keyword>
<sequence>MMLDPINHHFQAHEEAYYSRFFNEQRGLHMIKVLPGGVYVSDQEELICTGLGSCVSACIWDPVKRVGGMNHFLLPFHNHFEEKHWHADELLSGASRYGSYAMEMLLNQLLSLGARRERLRMKLFGGAQMMGFHSMIGEKNVEFVLHYAEQEGLEVVAYDLGGLEPRKIMFDPLTGKAWLKRIPFAEINHLRREEERYAHTLEKQTDNDSEVELF</sequence>
<evidence type="ECO:0000255" key="1">
    <source>
        <dbReference type="HAMAP-Rule" id="MF_01440"/>
    </source>
</evidence>
<proteinExistence type="inferred from homology"/>
<gene>
    <name evidence="1" type="primary">cheD</name>
    <name type="ordered locus">VV2_1162</name>
</gene>
<organism>
    <name type="scientific">Vibrio vulnificus (strain CMCP6)</name>
    <dbReference type="NCBI Taxonomy" id="216895"/>
    <lineage>
        <taxon>Bacteria</taxon>
        <taxon>Pseudomonadati</taxon>
        <taxon>Pseudomonadota</taxon>
        <taxon>Gammaproteobacteria</taxon>
        <taxon>Vibrionales</taxon>
        <taxon>Vibrionaceae</taxon>
        <taxon>Vibrio</taxon>
    </lineage>
</organism>
<dbReference type="EC" id="3.5.1.44" evidence="1"/>
<dbReference type="EMBL" id="AE016796">
    <property type="protein sequence ID" value="AAO08061.1"/>
    <property type="molecule type" value="Genomic_DNA"/>
</dbReference>
<dbReference type="RefSeq" id="WP_011082056.1">
    <property type="nucleotide sequence ID" value="NC_004460.2"/>
</dbReference>
<dbReference type="SMR" id="Q8D4X5"/>
<dbReference type="KEGG" id="vvu:VV2_1162"/>
<dbReference type="HOGENOM" id="CLU_087854_0_0_6"/>
<dbReference type="Proteomes" id="UP000002275">
    <property type="component" value="Chromosome 2"/>
</dbReference>
<dbReference type="GO" id="GO:0050568">
    <property type="term" value="F:protein-glutamine glutaminase activity"/>
    <property type="evidence" value="ECO:0007669"/>
    <property type="project" value="UniProtKB-UniRule"/>
</dbReference>
<dbReference type="GO" id="GO:0006935">
    <property type="term" value="P:chemotaxis"/>
    <property type="evidence" value="ECO:0007669"/>
    <property type="project" value="UniProtKB-UniRule"/>
</dbReference>
<dbReference type="CDD" id="cd16352">
    <property type="entry name" value="CheD"/>
    <property type="match status" value="1"/>
</dbReference>
<dbReference type="Gene3D" id="3.30.1330.200">
    <property type="match status" value="1"/>
</dbReference>
<dbReference type="HAMAP" id="MF_01440">
    <property type="entry name" value="CheD"/>
    <property type="match status" value="1"/>
</dbReference>
<dbReference type="InterPro" id="IPR038592">
    <property type="entry name" value="CheD-like_sf"/>
</dbReference>
<dbReference type="InterPro" id="IPR005659">
    <property type="entry name" value="Chemorcpt_Glu_NH3ase_CheD"/>
</dbReference>
<dbReference type="InterPro" id="IPR011324">
    <property type="entry name" value="Cytotoxic_necrot_fac-like_cat"/>
</dbReference>
<dbReference type="NCBIfam" id="NF010016">
    <property type="entry name" value="PRK13493.1"/>
    <property type="match status" value="1"/>
</dbReference>
<dbReference type="PANTHER" id="PTHR35147">
    <property type="entry name" value="CHEMORECEPTOR GLUTAMINE DEAMIDASE CHED-RELATED"/>
    <property type="match status" value="1"/>
</dbReference>
<dbReference type="PANTHER" id="PTHR35147:SF2">
    <property type="entry name" value="CHEMORECEPTOR GLUTAMINE DEAMIDASE CHED-RELATED"/>
    <property type="match status" value="1"/>
</dbReference>
<dbReference type="Pfam" id="PF03975">
    <property type="entry name" value="CheD"/>
    <property type="match status" value="1"/>
</dbReference>
<dbReference type="SUPFAM" id="SSF64438">
    <property type="entry name" value="CNF1/YfiH-like putative cysteine hydrolases"/>
    <property type="match status" value="1"/>
</dbReference>
<name>CHED_VIBVU</name>
<protein>
    <recommendedName>
        <fullName evidence="1">Probable chemoreceptor glutamine deamidase CheD</fullName>
        <ecNumber evidence="1">3.5.1.44</ecNumber>
    </recommendedName>
</protein>
<accession>Q8D4X5</accession>
<feature type="chain" id="PRO_0000251077" description="Probable chemoreceptor glutamine deamidase CheD">
    <location>
        <begin position="1"/>
        <end position="214"/>
    </location>
</feature>